<keyword id="KW-0378">Hydrolase</keyword>
<sequence length="261" mass="29826">MKVQIYQLPIVFGDSSKNETQITQWFEKNMNAEVDVVVLPEMWNNGYDLEHLNEKADNNLGQSFSFIKHLAEKYKVDIVAGSVSNIRNNQIFNTAFSVNKSGQLINEYDKVHLVPMLREHEFLTAGEYVAEPFQLSDGTYVTQLICYDLRFPELLRYPARSGAKIAFYVAQWPMSRLQHWHSLLKARAIENNMFVIGTNSTGFDGNTEYAGHSIVINPNGDLVGELNESADILTVDLNLNEVEQQRENIPVFKSIKLDLYK</sequence>
<feature type="chain" id="PRO_0000213264" description="Hydrolase in agr operon">
    <location>
        <begin position="1"/>
        <end position="261"/>
    </location>
</feature>
<feature type="domain" description="CN hydrolase" evidence="1">
    <location>
        <begin position="1"/>
        <end position="239"/>
    </location>
</feature>
<feature type="active site" description="Proton acceptor" evidence="1">
    <location>
        <position position="41"/>
    </location>
</feature>
<feature type="active site" description="Proton donor" evidence="1">
    <location>
        <position position="110"/>
    </location>
</feature>
<feature type="active site" description="Nucleophile" evidence="1">
    <location>
        <position position="146"/>
    </location>
</feature>
<reference key="1">
    <citation type="journal article" date="1995" name="Mol. Gen. Genet.">
        <title>The agr P2 operon: an autocatalytic sensory transduction system in Staphylococcus aureus.</title>
        <authorList>
            <person name="Novick R.P."/>
            <person name="Projan S.J."/>
            <person name="Kornblum J."/>
            <person name="Ross H.F."/>
            <person name="Ji G."/>
            <person name="Kreiswirth B."/>
            <person name="Vandenesch F."/>
            <person name="Moghazeh S."/>
        </authorList>
    </citation>
    <scope>NUCLEOTIDE SEQUENCE [GENOMIC DNA]</scope>
    <source>
        <strain>Isolate GAL</strain>
    </source>
</reference>
<dbReference type="EC" id="3.5.-.-"/>
<dbReference type="EMBL" id="X52543">
    <property type="protein sequence ID" value="CAA36779.1"/>
    <property type="molecule type" value="Genomic_DNA"/>
</dbReference>
<dbReference type="PIR" id="S20793">
    <property type="entry name" value="S20793"/>
</dbReference>
<dbReference type="RefSeq" id="WP_000867960.1">
    <property type="nucleotide sequence ID" value="NZ_WWFR01000006.1"/>
</dbReference>
<dbReference type="SMR" id="P55177"/>
<dbReference type="OMA" id="KIHRFGF"/>
<dbReference type="GO" id="GO:0016787">
    <property type="term" value="F:hydrolase activity"/>
    <property type="evidence" value="ECO:0007669"/>
    <property type="project" value="UniProtKB-KW"/>
</dbReference>
<dbReference type="CDD" id="cd07583">
    <property type="entry name" value="nitrilase_5"/>
    <property type="match status" value="1"/>
</dbReference>
<dbReference type="Gene3D" id="3.60.110.10">
    <property type="entry name" value="Carbon-nitrogen hydrolase"/>
    <property type="match status" value="1"/>
</dbReference>
<dbReference type="InterPro" id="IPR003010">
    <property type="entry name" value="C-N_Hydrolase"/>
</dbReference>
<dbReference type="InterPro" id="IPR036526">
    <property type="entry name" value="C-N_Hydrolase_sf"/>
</dbReference>
<dbReference type="InterPro" id="IPR001110">
    <property type="entry name" value="UPF0012_CS"/>
</dbReference>
<dbReference type="PANTHER" id="PTHR23088:SF27">
    <property type="entry name" value="DEAMINATED GLUTATHIONE AMIDASE"/>
    <property type="match status" value="1"/>
</dbReference>
<dbReference type="PANTHER" id="PTHR23088">
    <property type="entry name" value="NITRILASE-RELATED"/>
    <property type="match status" value="1"/>
</dbReference>
<dbReference type="Pfam" id="PF00795">
    <property type="entry name" value="CN_hydrolase"/>
    <property type="match status" value="1"/>
</dbReference>
<dbReference type="SUPFAM" id="SSF56317">
    <property type="entry name" value="Carbon-nitrogen hydrolase"/>
    <property type="match status" value="1"/>
</dbReference>
<dbReference type="PROSITE" id="PS50263">
    <property type="entry name" value="CN_HYDROLASE"/>
    <property type="match status" value="1"/>
</dbReference>
<dbReference type="PROSITE" id="PS01227">
    <property type="entry name" value="UPF0012"/>
    <property type="match status" value="1"/>
</dbReference>
<name>YAG5_STAAU</name>
<proteinExistence type="inferred from homology"/>
<evidence type="ECO:0000255" key="1">
    <source>
        <dbReference type="PROSITE-ProRule" id="PRU00054"/>
    </source>
</evidence>
<evidence type="ECO:0000305" key="2"/>
<accession>P55177</accession>
<comment type="similarity">
    <text evidence="2">Belongs to the carbon-nitrogen hydrolase superfamily. NIT1/NIT2 family.</text>
</comment>
<protein>
    <recommendedName>
        <fullName>Hydrolase in agr operon</fullName>
        <ecNumber>3.5.-.-</ecNumber>
    </recommendedName>
    <alternativeName>
        <fullName>ORF 5</fullName>
    </alternativeName>
</protein>
<organism>
    <name type="scientific">Staphylococcus aureus</name>
    <dbReference type="NCBI Taxonomy" id="1280"/>
    <lineage>
        <taxon>Bacteria</taxon>
        <taxon>Bacillati</taxon>
        <taxon>Bacillota</taxon>
        <taxon>Bacilli</taxon>
        <taxon>Bacillales</taxon>
        <taxon>Staphylococcaceae</taxon>
        <taxon>Staphylococcus</taxon>
    </lineage>
</organism>